<name>UPPP_ECOLU</name>
<keyword id="KW-0046">Antibiotic resistance</keyword>
<keyword id="KW-0997">Cell inner membrane</keyword>
<keyword id="KW-1003">Cell membrane</keyword>
<keyword id="KW-0133">Cell shape</keyword>
<keyword id="KW-0961">Cell wall biogenesis/degradation</keyword>
<keyword id="KW-0378">Hydrolase</keyword>
<keyword id="KW-0472">Membrane</keyword>
<keyword id="KW-0573">Peptidoglycan synthesis</keyword>
<keyword id="KW-0812">Transmembrane</keyword>
<keyword id="KW-1133">Transmembrane helix</keyword>
<dbReference type="EC" id="3.6.1.27" evidence="1"/>
<dbReference type="EMBL" id="CU928163">
    <property type="protein sequence ID" value="CAR14696.1"/>
    <property type="molecule type" value="Genomic_DNA"/>
</dbReference>
<dbReference type="RefSeq" id="YP_002414201.1">
    <property type="nucleotide sequence ID" value="NC_011751.1"/>
</dbReference>
<dbReference type="SMR" id="B7ND46"/>
<dbReference type="STRING" id="585056.ECUMN_3540"/>
<dbReference type="KEGG" id="eum:ECUMN_3540"/>
<dbReference type="PATRIC" id="fig|585056.7.peg.3714"/>
<dbReference type="HOGENOM" id="CLU_060296_2_0_6"/>
<dbReference type="Proteomes" id="UP000007097">
    <property type="component" value="Chromosome"/>
</dbReference>
<dbReference type="GO" id="GO:0005886">
    <property type="term" value="C:plasma membrane"/>
    <property type="evidence" value="ECO:0007669"/>
    <property type="project" value="UniProtKB-SubCell"/>
</dbReference>
<dbReference type="GO" id="GO:0050380">
    <property type="term" value="F:undecaprenyl-diphosphatase activity"/>
    <property type="evidence" value="ECO:0007669"/>
    <property type="project" value="UniProtKB-UniRule"/>
</dbReference>
<dbReference type="GO" id="GO:0071555">
    <property type="term" value="P:cell wall organization"/>
    <property type="evidence" value="ECO:0007669"/>
    <property type="project" value="UniProtKB-KW"/>
</dbReference>
<dbReference type="GO" id="GO:0009252">
    <property type="term" value="P:peptidoglycan biosynthetic process"/>
    <property type="evidence" value="ECO:0007669"/>
    <property type="project" value="UniProtKB-KW"/>
</dbReference>
<dbReference type="GO" id="GO:0008360">
    <property type="term" value="P:regulation of cell shape"/>
    <property type="evidence" value="ECO:0007669"/>
    <property type="project" value="UniProtKB-KW"/>
</dbReference>
<dbReference type="GO" id="GO:0046677">
    <property type="term" value="P:response to antibiotic"/>
    <property type="evidence" value="ECO:0007669"/>
    <property type="project" value="UniProtKB-UniRule"/>
</dbReference>
<dbReference type="HAMAP" id="MF_01006">
    <property type="entry name" value="Undec_diphosphatase"/>
    <property type="match status" value="1"/>
</dbReference>
<dbReference type="InterPro" id="IPR003824">
    <property type="entry name" value="UppP"/>
</dbReference>
<dbReference type="NCBIfam" id="NF001388">
    <property type="entry name" value="PRK00281.1-1"/>
    <property type="match status" value="1"/>
</dbReference>
<dbReference type="NCBIfam" id="NF001389">
    <property type="entry name" value="PRK00281.1-2"/>
    <property type="match status" value="1"/>
</dbReference>
<dbReference type="NCBIfam" id="NF001390">
    <property type="entry name" value="PRK00281.1-4"/>
    <property type="match status" value="1"/>
</dbReference>
<dbReference type="NCBIfam" id="TIGR00753">
    <property type="entry name" value="undec_PP_bacA"/>
    <property type="match status" value="1"/>
</dbReference>
<dbReference type="PANTHER" id="PTHR30622">
    <property type="entry name" value="UNDECAPRENYL-DIPHOSPHATASE"/>
    <property type="match status" value="1"/>
</dbReference>
<dbReference type="PANTHER" id="PTHR30622:SF3">
    <property type="entry name" value="UNDECAPRENYL-DIPHOSPHATASE"/>
    <property type="match status" value="1"/>
</dbReference>
<dbReference type="Pfam" id="PF02673">
    <property type="entry name" value="BacA"/>
    <property type="match status" value="1"/>
</dbReference>
<protein>
    <recommendedName>
        <fullName evidence="1">Undecaprenyl-diphosphatase</fullName>
        <ecNumber evidence="1">3.6.1.27</ecNumber>
    </recommendedName>
    <alternativeName>
        <fullName evidence="1">Bacitracin resistance protein</fullName>
    </alternativeName>
    <alternativeName>
        <fullName evidence="1">Undecaprenyl pyrophosphate phosphatase</fullName>
    </alternativeName>
</protein>
<accession>B7ND46</accession>
<sequence>MSDMHSLLIAAILGVVEGLTEFLPVSSTGHMIIVGHLLGFEGDTAKTFEVVIQLGSILAVVVMFWRRLFGLIGIHFGRPLQHEGESKGRLTLIHILLGMIPAVVLGLLFHDTIKSLFNPINVMYALVVGGLLLIAAECLKPKEPRAPGLDDMTYRQAFMIGCFQCLALWPGFSRSGATISGGMLMGVSRYAASEFSFLLAVPMMMGATALDLYKSWGFLTTGDIPMFAVGFITAFVVALIAIKTFLQLIKRISFIPFAIYRFIVAAAVYVVFF</sequence>
<comment type="function">
    <text evidence="1">Catalyzes the dephosphorylation of undecaprenyl diphosphate (UPP). Confers resistance to bacitracin.</text>
</comment>
<comment type="catalytic activity">
    <reaction evidence="1">
        <text>di-trans,octa-cis-undecaprenyl diphosphate + H2O = di-trans,octa-cis-undecaprenyl phosphate + phosphate + H(+)</text>
        <dbReference type="Rhea" id="RHEA:28094"/>
        <dbReference type="ChEBI" id="CHEBI:15377"/>
        <dbReference type="ChEBI" id="CHEBI:15378"/>
        <dbReference type="ChEBI" id="CHEBI:43474"/>
        <dbReference type="ChEBI" id="CHEBI:58405"/>
        <dbReference type="ChEBI" id="CHEBI:60392"/>
        <dbReference type="EC" id="3.6.1.27"/>
    </reaction>
</comment>
<comment type="subcellular location">
    <subcellularLocation>
        <location evidence="1">Cell inner membrane</location>
        <topology evidence="1">Multi-pass membrane protein</topology>
    </subcellularLocation>
</comment>
<comment type="miscellaneous">
    <text>Bacitracin is thought to be involved in the inhibition of peptidoglycan synthesis by sequestering undecaprenyl diphosphate, thereby reducing the pool of lipid carrier available.</text>
</comment>
<comment type="similarity">
    <text evidence="1">Belongs to the UppP family.</text>
</comment>
<gene>
    <name evidence="1" type="primary">uppP</name>
    <name type="ordered locus">ECUMN_3540</name>
</gene>
<reference key="1">
    <citation type="journal article" date="2009" name="PLoS Genet.">
        <title>Organised genome dynamics in the Escherichia coli species results in highly diverse adaptive paths.</title>
        <authorList>
            <person name="Touchon M."/>
            <person name="Hoede C."/>
            <person name="Tenaillon O."/>
            <person name="Barbe V."/>
            <person name="Baeriswyl S."/>
            <person name="Bidet P."/>
            <person name="Bingen E."/>
            <person name="Bonacorsi S."/>
            <person name="Bouchier C."/>
            <person name="Bouvet O."/>
            <person name="Calteau A."/>
            <person name="Chiapello H."/>
            <person name="Clermont O."/>
            <person name="Cruveiller S."/>
            <person name="Danchin A."/>
            <person name="Diard M."/>
            <person name="Dossat C."/>
            <person name="Karoui M.E."/>
            <person name="Frapy E."/>
            <person name="Garry L."/>
            <person name="Ghigo J.M."/>
            <person name="Gilles A.M."/>
            <person name="Johnson J."/>
            <person name="Le Bouguenec C."/>
            <person name="Lescat M."/>
            <person name="Mangenot S."/>
            <person name="Martinez-Jehanne V."/>
            <person name="Matic I."/>
            <person name="Nassif X."/>
            <person name="Oztas S."/>
            <person name="Petit M.A."/>
            <person name="Pichon C."/>
            <person name="Rouy Z."/>
            <person name="Ruf C.S."/>
            <person name="Schneider D."/>
            <person name="Tourret J."/>
            <person name="Vacherie B."/>
            <person name="Vallenet D."/>
            <person name="Medigue C."/>
            <person name="Rocha E.P.C."/>
            <person name="Denamur E."/>
        </authorList>
    </citation>
    <scope>NUCLEOTIDE SEQUENCE [LARGE SCALE GENOMIC DNA]</scope>
    <source>
        <strain>UMN026 / ExPEC</strain>
    </source>
</reference>
<feature type="chain" id="PRO_1000197368" description="Undecaprenyl-diphosphatase">
    <location>
        <begin position="1"/>
        <end position="273"/>
    </location>
</feature>
<feature type="transmembrane region" description="Helical" evidence="1">
    <location>
        <begin position="6"/>
        <end position="26"/>
    </location>
</feature>
<feature type="transmembrane region" description="Helical" evidence="1">
    <location>
        <begin position="45"/>
        <end position="65"/>
    </location>
</feature>
<feature type="transmembrane region" description="Helical" evidence="1">
    <location>
        <begin position="90"/>
        <end position="110"/>
    </location>
</feature>
<feature type="transmembrane region" description="Helical" evidence="1">
    <location>
        <begin position="116"/>
        <end position="136"/>
    </location>
</feature>
<feature type="transmembrane region" description="Helical" evidence="1">
    <location>
        <begin position="190"/>
        <end position="210"/>
    </location>
</feature>
<feature type="transmembrane region" description="Helical" evidence="1">
    <location>
        <begin position="222"/>
        <end position="242"/>
    </location>
</feature>
<feature type="transmembrane region" description="Helical" evidence="1">
    <location>
        <begin position="252"/>
        <end position="272"/>
    </location>
</feature>
<proteinExistence type="inferred from homology"/>
<organism>
    <name type="scientific">Escherichia coli O17:K52:H18 (strain UMN026 / ExPEC)</name>
    <dbReference type="NCBI Taxonomy" id="585056"/>
    <lineage>
        <taxon>Bacteria</taxon>
        <taxon>Pseudomonadati</taxon>
        <taxon>Pseudomonadota</taxon>
        <taxon>Gammaproteobacteria</taxon>
        <taxon>Enterobacterales</taxon>
        <taxon>Enterobacteriaceae</taxon>
        <taxon>Escherichia</taxon>
    </lineage>
</organism>
<evidence type="ECO:0000255" key="1">
    <source>
        <dbReference type="HAMAP-Rule" id="MF_01006"/>
    </source>
</evidence>